<reference key="1">
    <citation type="submission" date="2006-12" db="EMBL/GenBank/DDBJ databases">
        <title>Complete sequence of Mycobacterium vanbaalenii PYR-1.</title>
        <authorList>
            <consortium name="US DOE Joint Genome Institute"/>
            <person name="Copeland A."/>
            <person name="Lucas S."/>
            <person name="Lapidus A."/>
            <person name="Barry K."/>
            <person name="Detter J.C."/>
            <person name="Glavina del Rio T."/>
            <person name="Hammon N."/>
            <person name="Israni S."/>
            <person name="Dalin E."/>
            <person name="Tice H."/>
            <person name="Pitluck S."/>
            <person name="Singan V."/>
            <person name="Schmutz J."/>
            <person name="Larimer F."/>
            <person name="Land M."/>
            <person name="Hauser L."/>
            <person name="Kyrpides N."/>
            <person name="Anderson I.J."/>
            <person name="Miller C."/>
            <person name="Richardson P."/>
        </authorList>
    </citation>
    <scope>NUCLEOTIDE SEQUENCE [LARGE SCALE GENOMIC DNA]</scope>
    <source>
        <strain>DSM 7251 / JCM 13017 / BCRC 16820 / KCTC 9966 / NRRL B-24157 / PYR-1</strain>
    </source>
</reference>
<comment type="function">
    <text evidence="1">Catalyzes the conversion of 1-hydroxy-2-methyl-2-(E)-butenyl 4-diphosphate (HMBPP) into a mixture of isopentenyl diphosphate (IPP) and dimethylallyl diphosphate (DMAPP). Acts in the terminal step of the DOXP/MEP pathway for isoprenoid precursor biosynthesis.</text>
</comment>
<comment type="catalytic activity">
    <reaction evidence="1">
        <text>isopentenyl diphosphate + 2 oxidized [2Fe-2S]-[ferredoxin] + H2O = (2E)-4-hydroxy-3-methylbut-2-enyl diphosphate + 2 reduced [2Fe-2S]-[ferredoxin] + 2 H(+)</text>
        <dbReference type="Rhea" id="RHEA:24488"/>
        <dbReference type="Rhea" id="RHEA-COMP:10000"/>
        <dbReference type="Rhea" id="RHEA-COMP:10001"/>
        <dbReference type="ChEBI" id="CHEBI:15377"/>
        <dbReference type="ChEBI" id="CHEBI:15378"/>
        <dbReference type="ChEBI" id="CHEBI:33737"/>
        <dbReference type="ChEBI" id="CHEBI:33738"/>
        <dbReference type="ChEBI" id="CHEBI:128753"/>
        <dbReference type="ChEBI" id="CHEBI:128769"/>
        <dbReference type="EC" id="1.17.7.4"/>
    </reaction>
</comment>
<comment type="catalytic activity">
    <reaction evidence="1">
        <text>dimethylallyl diphosphate + 2 oxidized [2Fe-2S]-[ferredoxin] + H2O = (2E)-4-hydroxy-3-methylbut-2-enyl diphosphate + 2 reduced [2Fe-2S]-[ferredoxin] + 2 H(+)</text>
        <dbReference type="Rhea" id="RHEA:24825"/>
        <dbReference type="Rhea" id="RHEA-COMP:10000"/>
        <dbReference type="Rhea" id="RHEA-COMP:10001"/>
        <dbReference type="ChEBI" id="CHEBI:15377"/>
        <dbReference type="ChEBI" id="CHEBI:15378"/>
        <dbReference type="ChEBI" id="CHEBI:33737"/>
        <dbReference type="ChEBI" id="CHEBI:33738"/>
        <dbReference type="ChEBI" id="CHEBI:57623"/>
        <dbReference type="ChEBI" id="CHEBI:128753"/>
        <dbReference type="EC" id="1.17.7.4"/>
    </reaction>
</comment>
<comment type="cofactor">
    <cofactor evidence="1">
        <name>[4Fe-4S] cluster</name>
        <dbReference type="ChEBI" id="CHEBI:49883"/>
    </cofactor>
    <text evidence="1">Binds 1 [4Fe-4S] cluster per subunit.</text>
</comment>
<comment type="pathway">
    <text evidence="1">Isoprenoid biosynthesis; dimethylallyl diphosphate biosynthesis; dimethylallyl diphosphate from (2E)-4-hydroxy-3-methylbutenyl diphosphate: step 1/1.</text>
</comment>
<comment type="pathway">
    <text evidence="1">Isoprenoid biosynthesis; isopentenyl diphosphate biosynthesis via DXP pathway; isopentenyl diphosphate from 1-deoxy-D-xylulose 5-phosphate: step 6/6.</text>
</comment>
<comment type="similarity">
    <text evidence="1">Belongs to the IspH family.</text>
</comment>
<evidence type="ECO:0000255" key="1">
    <source>
        <dbReference type="HAMAP-Rule" id="MF_00191"/>
    </source>
</evidence>
<dbReference type="EC" id="1.17.7.4" evidence="1"/>
<dbReference type="EMBL" id="CP000511">
    <property type="protein sequence ID" value="ABM15406.1"/>
    <property type="molecule type" value="Genomic_DNA"/>
</dbReference>
<dbReference type="RefSeq" id="WP_011781783.1">
    <property type="nucleotide sequence ID" value="NZ_JACKSD010000357.1"/>
</dbReference>
<dbReference type="SMR" id="A1TE06"/>
<dbReference type="STRING" id="350058.Mvan_4631"/>
<dbReference type="KEGG" id="mva:Mvan_4631"/>
<dbReference type="eggNOG" id="COG0761">
    <property type="taxonomic scope" value="Bacteria"/>
</dbReference>
<dbReference type="HOGENOM" id="CLU_027486_1_0_11"/>
<dbReference type="UniPathway" id="UPA00056">
    <property type="reaction ID" value="UER00097"/>
</dbReference>
<dbReference type="UniPathway" id="UPA00059">
    <property type="reaction ID" value="UER00105"/>
</dbReference>
<dbReference type="Proteomes" id="UP000009159">
    <property type="component" value="Chromosome"/>
</dbReference>
<dbReference type="GO" id="GO:0051539">
    <property type="term" value="F:4 iron, 4 sulfur cluster binding"/>
    <property type="evidence" value="ECO:0007669"/>
    <property type="project" value="UniProtKB-UniRule"/>
</dbReference>
<dbReference type="GO" id="GO:0051745">
    <property type="term" value="F:4-hydroxy-3-methylbut-2-enyl diphosphate reductase activity"/>
    <property type="evidence" value="ECO:0007669"/>
    <property type="project" value="UniProtKB-UniRule"/>
</dbReference>
<dbReference type="GO" id="GO:0046872">
    <property type="term" value="F:metal ion binding"/>
    <property type="evidence" value="ECO:0007669"/>
    <property type="project" value="UniProtKB-KW"/>
</dbReference>
<dbReference type="GO" id="GO:0050992">
    <property type="term" value="P:dimethylallyl diphosphate biosynthetic process"/>
    <property type="evidence" value="ECO:0007669"/>
    <property type="project" value="UniProtKB-UniRule"/>
</dbReference>
<dbReference type="GO" id="GO:0019288">
    <property type="term" value="P:isopentenyl diphosphate biosynthetic process, methylerythritol 4-phosphate pathway"/>
    <property type="evidence" value="ECO:0007669"/>
    <property type="project" value="UniProtKB-UniRule"/>
</dbReference>
<dbReference type="GO" id="GO:0016114">
    <property type="term" value="P:terpenoid biosynthetic process"/>
    <property type="evidence" value="ECO:0007669"/>
    <property type="project" value="UniProtKB-UniRule"/>
</dbReference>
<dbReference type="CDD" id="cd13944">
    <property type="entry name" value="lytB_ispH"/>
    <property type="match status" value="1"/>
</dbReference>
<dbReference type="Gene3D" id="3.40.50.11270">
    <property type="match status" value="1"/>
</dbReference>
<dbReference type="Gene3D" id="3.40.1010.20">
    <property type="entry name" value="4-hydroxy-3-methylbut-2-enyl diphosphate reductase, catalytic domain"/>
    <property type="match status" value="2"/>
</dbReference>
<dbReference type="HAMAP" id="MF_00191">
    <property type="entry name" value="IspH"/>
    <property type="match status" value="1"/>
</dbReference>
<dbReference type="InterPro" id="IPR003451">
    <property type="entry name" value="LytB/IspH"/>
</dbReference>
<dbReference type="NCBIfam" id="TIGR00216">
    <property type="entry name" value="ispH_lytB"/>
    <property type="match status" value="1"/>
</dbReference>
<dbReference type="NCBIfam" id="NF002188">
    <property type="entry name" value="PRK01045.1-2"/>
    <property type="match status" value="1"/>
</dbReference>
<dbReference type="NCBIfam" id="NF002189">
    <property type="entry name" value="PRK01045.1-3"/>
    <property type="match status" value="1"/>
</dbReference>
<dbReference type="NCBIfam" id="NF002190">
    <property type="entry name" value="PRK01045.1-4"/>
    <property type="match status" value="1"/>
</dbReference>
<dbReference type="PANTHER" id="PTHR30426">
    <property type="entry name" value="4-HYDROXY-3-METHYLBUT-2-ENYL DIPHOSPHATE REDUCTASE"/>
    <property type="match status" value="1"/>
</dbReference>
<dbReference type="PANTHER" id="PTHR30426:SF0">
    <property type="entry name" value="4-HYDROXY-3-METHYLBUT-2-ENYL DIPHOSPHATE REDUCTASE"/>
    <property type="match status" value="1"/>
</dbReference>
<dbReference type="Pfam" id="PF02401">
    <property type="entry name" value="LYTB"/>
    <property type="match status" value="1"/>
</dbReference>
<name>ISPH_MYCVP</name>
<organism>
    <name type="scientific">Mycolicibacterium vanbaalenii (strain DSM 7251 / JCM 13017 / BCRC 16820 / KCTC 9966 / NRRL B-24157 / PYR-1)</name>
    <name type="common">Mycobacterium vanbaalenii</name>
    <dbReference type="NCBI Taxonomy" id="350058"/>
    <lineage>
        <taxon>Bacteria</taxon>
        <taxon>Bacillati</taxon>
        <taxon>Actinomycetota</taxon>
        <taxon>Actinomycetes</taxon>
        <taxon>Mycobacteriales</taxon>
        <taxon>Mycobacteriaceae</taxon>
        <taxon>Mycolicibacterium</taxon>
    </lineage>
</organism>
<accession>A1TE06</accession>
<feature type="chain" id="PRO_1000021141" description="4-hydroxy-3-methylbut-2-enyl diphosphate reductase">
    <location>
        <begin position="1"/>
        <end position="337"/>
    </location>
</feature>
<feature type="active site" description="Proton donor" evidence="1">
    <location>
        <position position="152"/>
    </location>
</feature>
<feature type="binding site" evidence="1">
    <location>
        <position position="38"/>
    </location>
    <ligand>
        <name>[4Fe-4S] cluster</name>
        <dbReference type="ChEBI" id="CHEBI:49883"/>
    </ligand>
</feature>
<feature type="binding site" evidence="1">
    <location>
        <position position="67"/>
    </location>
    <ligand>
        <name>(2E)-4-hydroxy-3-methylbut-2-enyl diphosphate</name>
        <dbReference type="ChEBI" id="CHEBI:128753"/>
    </ligand>
</feature>
<feature type="binding site" evidence="1">
    <location>
        <position position="67"/>
    </location>
    <ligand>
        <name>dimethylallyl diphosphate</name>
        <dbReference type="ChEBI" id="CHEBI:57623"/>
    </ligand>
</feature>
<feature type="binding site" evidence="1">
    <location>
        <position position="67"/>
    </location>
    <ligand>
        <name>isopentenyl diphosphate</name>
        <dbReference type="ChEBI" id="CHEBI:128769"/>
    </ligand>
</feature>
<feature type="binding site" evidence="1">
    <location>
        <position position="100"/>
    </location>
    <ligand>
        <name>(2E)-4-hydroxy-3-methylbut-2-enyl diphosphate</name>
        <dbReference type="ChEBI" id="CHEBI:128753"/>
    </ligand>
</feature>
<feature type="binding site" evidence="1">
    <location>
        <position position="100"/>
    </location>
    <ligand>
        <name>dimethylallyl diphosphate</name>
        <dbReference type="ChEBI" id="CHEBI:57623"/>
    </ligand>
</feature>
<feature type="binding site" evidence="1">
    <location>
        <position position="100"/>
    </location>
    <ligand>
        <name>isopentenyl diphosphate</name>
        <dbReference type="ChEBI" id="CHEBI:128769"/>
    </ligand>
</feature>
<feature type="binding site" evidence="1">
    <location>
        <position position="122"/>
    </location>
    <ligand>
        <name>[4Fe-4S] cluster</name>
        <dbReference type="ChEBI" id="CHEBI:49883"/>
    </ligand>
</feature>
<feature type="binding site" evidence="1">
    <location>
        <position position="150"/>
    </location>
    <ligand>
        <name>(2E)-4-hydroxy-3-methylbut-2-enyl diphosphate</name>
        <dbReference type="ChEBI" id="CHEBI:128753"/>
    </ligand>
</feature>
<feature type="binding site" evidence="1">
    <location>
        <position position="150"/>
    </location>
    <ligand>
        <name>dimethylallyl diphosphate</name>
        <dbReference type="ChEBI" id="CHEBI:57623"/>
    </ligand>
</feature>
<feature type="binding site" evidence="1">
    <location>
        <position position="150"/>
    </location>
    <ligand>
        <name>isopentenyl diphosphate</name>
        <dbReference type="ChEBI" id="CHEBI:128769"/>
    </ligand>
</feature>
<feature type="binding site" evidence="1">
    <location>
        <position position="190"/>
    </location>
    <ligand>
        <name>(2E)-4-hydroxy-3-methylbut-2-enyl diphosphate</name>
        <dbReference type="ChEBI" id="CHEBI:128753"/>
    </ligand>
</feature>
<feature type="binding site" evidence="1">
    <location>
        <position position="220"/>
    </location>
    <ligand>
        <name>[4Fe-4S] cluster</name>
        <dbReference type="ChEBI" id="CHEBI:49883"/>
    </ligand>
</feature>
<feature type="binding site" evidence="1">
    <location>
        <position position="248"/>
    </location>
    <ligand>
        <name>(2E)-4-hydroxy-3-methylbut-2-enyl diphosphate</name>
        <dbReference type="ChEBI" id="CHEBI:128753"/>
    </ligand>
</feature>
<feature type="binding site" evidence="1">
    <location>
        <position position="248"/>
    </location>
    <ligand>
        <name>dimethylallyl diphosphate</name>
        <dbReference type="ChEBI" id="CHEBI:57623"/>
    </ligand>
</feature>
<feature type="binding site" evidence="1">
    <location>
        <position position="248"/>
    </location>
    <ligand>
        <name>isopentenyl diphosphate</name>
        <dbReference type="ChEBI" id="CHEBI:128769"/>
    </ligand>
</feature>
<feature type="binding site" evidence="1">
    <location>
        <position position="249"/>
    </location>
    <ligand>
        <name>(2E)-4-hydroxy-3-methylbut-2-enyl diphosphate</name>
        <dbReference type="ChEBI" id="CHEBI:128753"/>
    </ligand>
</feature>
<feature type="binding site" evidence="1">
    <location>
        <position position="249"/>
    </location>
    <ligand>
        <name>dimethylallyl diphosphate</name>
        <dbReference type="ChEBI" id="CHEBI:57623"/>
    </ligand>
</feature>
<feature type="binding site" evidence="1">
    <location>
        <position position="249"/>
    </location>
    <ligand>
        <name>isopentenyl diphosphate</name>
        <dbReference type="ChEBI" id="CHEBI:128769"/>
    </ligand>
</feature>
<feature type="binding site" evidence="1">
    <location>
        <position position="250"/>
    </location>
    <ligand>
        <name>(2E)-4-hydroxy-3-methylbut-2-enyl diphosphate</name>
        <dbReference type="ChEBI" id="CHEBI:128753"/>
    </ligand>
</feature>
<feature type="binding site" evidence="1">
    <location>
        <position position="250"/>
    </location>
    <ligand>
        <name>dimethylallyl diphosphate</name>
        <dbReference type="ChEBI" id="CHEBI:57623"/>
    </ligand>
</feature>
<feature type="binding site" evidence="1">
    <location>
        <position position="250"/>
    </location>
    <ligand>
        <name>isopentenyl diphosphate</name>
        <dbReference type="ChEBI" id="CHEBI:128769"/>
    </ligand>
</feature>
<feature type="binding site" evidence="1">
    <location>
        <position position="293"/>
    </location>
    <ligand>
        <name>(2E)-4-hydroxy-3-methylbut-2-enyl diphosphate</name>
        <dbReference type="ChEBI" id="CHEBI:128753"/>
    </ligand>
</feature>
<feature type="binding site" evidence="1">
    <location>
        <position position="293"/>
    </location>
    <ligand>
        <name>dimethylallyl diphosphate</name>
        <dbReference type="ChEBI" id="CHEBI:57623"/>
    </ligand>
</feature>
<feature type="binding site" evidence="1">
    <location>
        <position position="293"/>
    </location>
    <ligand>
        <name>isopentenyl diphosphate</name>
        <dbReference type="ChEBI" id="CHEBI:128769"/>
    </ligand>
</feature>
<keyword id="KW-0004">4Fe-4S</keyword>
<keyword id="KW-0408">Iron</keyword>
<keyword id="KW-0411">Iron-sulfur</keyword>
<keyword id="KW-0414">Isoprene biosynthesis</keyword>
<keyword id="KW-0479">Metal-binding</keyword>
<keyword id="KW-0560">Oxidoreductase</keyword>
<proteinExistence type="inferred from homology"/>
<sequence>MPPTVNMGIPGASRTALGSVAGDVTGKRVLLAEPRGYCAGVDRAVETVERALEKHGAPIYVRHEIVHNRYVVDTLAKAGAIFVEQTDEVPEGAIVVFSAHGVAPTVHEEAAARHLRTIDATCPLVTKVHNEAKRFARDDYDILLVGHEGHEEVVGTAGEAPDHVQVVDNPDAVDKVTVRDPNKVIWLSQTTLSVDETMETVRRLREKFPTLQDPPSDDICYATQNRQVAVKAMAPECELVIVVGSKNSSNSVRLVEVALGAGASAAHLVDYADDIDPAWFDGVTTVGVTSGASVPEILVRGVLDRLAEHGYDVVQPVTTANETLVFALPREIRPARQ</sequence>
<protein>
    <recommendedName>
        <fullName evidence="1">4-hydroxy-3-methylbut-2-enyl diphosphate reductase</fullName>
        <shortName evidence="1">HMBPP reductase</shortName>
        <ecNumber evidence="1">1.17.7.4</ecNumber>
    </recommendedName>
</protein>
<gene>
    <name evidence="1" type="primary">ispH</name>
    <name type="ordered locus">Mvan_4631</name>
</gene>